<dbReference type="EMBL" id="CP001336">
    <property type="protein sequence ID" value="ACL22350.1"/>
    <property type="molecule type" value="Genomic_DNA"/>
</dbReference>
<dbReference type="RefSeq" id="WP_005816777.1">
    <property type="nucleotide sequence ID" value="NC_011830.1"/>
</dbReference>
<dbReference type="SMR" id="B8FUT0"/>
<dbReference type="KEGG" id="dhd:Dhaf_4345"/>
<dbReference type="HOGENOM" id="CLU_137929_1_1_9"/>
<dbReference type="Proteomes" id="UP000007726">
    <property type="component" value="Chromosome"/>
</dbReference>
<dbReference type="GO" id="GO:0051301">
    <property type="term" value="P:cell division"/>
    <property type="evidence" value="ECO:0007669"/>
    <property type="project" value="UniProtKB-KW"/>
</dbReference>
<dbReference type="GO" id="GO:0032955">
    <property type="term" value="P:regulation of division septum assembly"/>
    <property type="evidence" value="ECO:0007669"/>
    <property type="project" value="InterPro"/>
</dbReference>
<dbReference type="Gene3D" id="3.30.1070.10">
    <property type="entry name" value="Cell division topological specificity factor MinE"/>
    <property type="match status" value="1"/>
</dbReference>
<dbReference type="HAMAP" id="MF_00262">
    <property type="entry name" value="MinE"/>
    <property type="match status" value="1"/>
</dbReference>
<dbReference type="InterPro" id="IPR005527">
    <property type="entry name" value="MinE"/>
</dbReference>
<dbReference type="InterPro" id="IPR036707">
    <property type="entry name" value="MinE_sf"/>
</dbReference>
<dbReference type="NCBIfam" id="TIGR01215">
    <property type="entry name" value="minE"/>
    <property type="match status" value="1"/>
</dbReference>
<dbReference type="Pfam" id="PF03776">
    <property type="entry name" value="MinE"/>
    <property type="match status" value="1"/>
</dbReference>
<dbReference type="SUPFAM" id="SSF55229">
    <property type="entry name" value="Cell division protein MinE topological specificity domain"/>
    <property type="match status" value="1"/>
</dbReference>
<organism>
    <name type="scientific">Desulfitobacterium hafniense (strain DSM 10664 / DCB-2)</name>
    <dbReference type="NCBI Taxonomy" id="272564"/>
    <lineage>
        <taxon>Bacteria</taxon>
        <taxon>Bacillati</taxon>
        <taxon>Bacillota</taxon>
        <taxon>Clostridia</taxon>
        <taxon>Eubacteriales</taxon>
        <taxon>Desulfitobacteriaceae</taxon>
        <taxon>Desulfitobacterium</taxon>
    </lineage>
</organism>
<comment type="function">
    <text evidence="1">Prevents the cell division inhibition by proteins MinC and MinD at internal division sites while permitting inhibition at polar sites. This ensures cell division at the proper site by restricting the formation of a division septum at the midpoint of the long axis of the cell.</text>
</comment>
<comment type="similarity">
    <text evidence="1">Belongs to the MinE family.</text>
</comment>
<evidence type="ECO:0000255" key="1">
    <source>
        <dbReference type="HAMAP-Rule" id="MF_00262"/>
    </source>
</evidence>
<keyword id="KW-0131">Cell cycle</keyword>
<keyword id="KW-0132">Cell division</keyword>
<protein>
    <recommendedName>
        <fullName evidence="1">Cell division topological specificity factor</fullName>
    </recommendedName>
</protein>
<proteinExistence type="inferred from homology"/>
<reference key="1">
    <citation type="journal article" date="2012" name="BMC Microbiol.">
        <title>Genome sequence of Desulfitobacterium hafniense DCB-2, a Gram-positive anaerobe capable of dehalogenation and metal reduction.</title>
        <authorList>
            <person name="Kim S.H."/>
            <person name="Harzman C."/>
            <person name="Davis J.K."/>
            <person name="Hutcheson R."/>
            <person name="Broderick J.B."/>
            <person name="Marsh T.L."/>
            <person name="Tiedje J.M."/>
        </authorList>
    </citation>
    <scope>NUCLEOTIDE SEQUENCE [LARGE SCALE GENOMIC DNA]</scope>
    <source>
        <strain>DSM 10664 / DCB-2</strain>
    </source>
</reference>
<sequence length="91" mass="10417">MLEFISRMLGKEPASKNVAKERLRLVLVHDRATISPHMLNQLKEDLIKVISNYMEIDEGALEVNLNQDDREVALIANIPVIKMKRDYSVKG</sequence>
<feature type="chain" id="PRO_1000191274" description="Cell division topological specificity factor">
    <location>
        <begin position="1"/>
        <end position="91"/>
    </location>
</feature>
<accession>B8FUT0</accession>
<gene>
    <name evidence="1" type="primary">minE</name>
    <name type="ordered locus">Dhaf_4345</name>
</gene>
<name>MINE_DESHD</name>